<evidence type="ECO:0000255" key="1">
    <source>
        <dbReference type="HAMAP-Rule" id="MF_00046"/>
    </source>
</evidence>
<keyword id="KW-0067">ATP-binding</keyword>
<keyword id="KW-0131">Cell cycle</keyword>
<keyword id="KW-0132">Cell division</keyword>
<keyword id="KW-0133">Cell shape</keyword>
<keyword id="KW-0961">Cell wall biogenesis/degradation</keyword>
<keyword id="KW-0963">Cytoplasm</keyword>
<keyword id="KW-0436">Ligase</keyword>
<keyword id="KW-0547">Nucleotide-binding</keyword>
<keyword id="KW-0573">Peptidoglycan synthesis</keyword>
<keyword id="KW-1185">Reference proteome</keyword>
<accession>Q12EL4</accession>
<dbReference type="EC" id="6.3.2.8" evidence="1"/>
<dbReference type="EMBL" id="CP000316">
    <property type="protein sequence ID" value="ABE43028.1"/>
    <property type="molecule type" value="Genomic_DNA"/>
</dbReference>
<dbReference type="RefSeq" id="WP_011482030.1">
    <property type="nucleotide sequence ID" value="NC_007948.1"/>
</dbReference>
<dbReference type="SMR" id="Q12EL4"/>
<dbReference type="STRING" id="296591.Bpro_1076"/>
<dbReference type="KEGG" id="pol:Bpro_1076"/>
<dbReference type="eggNOG" id="COG0773">
    <property type="taxonomic scope" value="Bacteria"/>
</dbReference>
<dbReference type="HOGENOM" id="CLU_028104_2_2_4"/>
<dbReference type="OrthoDB" id="9804126at2"/>
<dbReference type="UniPathway" id="UPA00219"/>
<dbReference type="Proteomes" id="UP000001983">
    <property type="component" value="Chromosome"/>
</dbReference>
<dbReference type="GO" id="GO:0005737">
    <property type="term" value="C:cytoplasm"/>
    <property type="evidence" value="ECO:0007669"/>
    <property type="project" value="UniProtKB-SubCell"/>
</dbReference>
<dbReference type="GO" id="GO:0005524">
    <property type="term" value="F:ATP binding"/>
    <property type="evidence" value="ECO:0007669"/>
    <property type="project" value="UniProtKB-UniRule"/>
</dbReference>
<dbReference type="GO" id="GO:0008763">
    <property type="term" value="F:UDP-N-acetylmuramate-L-alanine ligase activity"/>
    <property type="evidence" value="ECO:0007669"/>
    <property type="project" value="UniProtKB-UniRule"/>
</dbReference>
<dbReference type="GO" id="GO:0051301">
    <property type="term" value="P:cell division"/>
    <property type="evidence" value="ECO:0007669"/>
    <property type="project" value="UniProtKB-KW"/>
</dbReference>
<dbReference type="GO" id="GO:0071555">
    <property type="term" value="P:cell wall organization"/>
    <property type="evidence" value="ECO:0007669"/>
    <property type="project" value="UniProtKB-KW"/>
</dbReference>
<dbReference type="GO" id="GO:0009252">
    <property type="term" value="P:peptidoglycan biosynthetic process"/>
    <property type="evidence" value="ECO:0007669"/>
    <property type="project" value="UniProtKB-UniRule"/>
</dbReference>
<dbReference type="GO" id="GO:0008360">
    <property type="term" value="P:regulation of cell shape"/>
    <property type="evidence" value="ECO:0007669"/>
    <property type="project" value="UniProtKB-KW"/>
</dbReference>
<dbReference type="FunFam" id="3.40.1190.10:FF:000001">
    <property type="entry name" value="UDP-N-acetylmuramate--L-alanine ligase"/>
    <property type="match status" value="1"/>
</dbReference>
<dbReference type="Gene3D" id="3.90.190.20">
    <property type="entry name" value="Mur ligase, C-terminal domain"/>
    <property type="match status" value="1"/>
</dbReference>
<dbReference type="Gene3D" id="3.40.1190.10">
    <property type="entry name" value="Mur-like, catalytic domain"/>
    <property type="match status" value="1"/>
</dbReference>
<dbReference type="Gene3D" id="3.40.50.720">
    <property type="entry name" value="NAD(P)-binding Rossmann-like Domain"/>
    <property type="match status" value="1"/>
</dbReference>
<dbReference type="HAMAP" id="MF_00046">
    <property type="entry name" value="MurC"/>
    <property type="match status" value="1"/>
</dbReference>
<dbReference type="InterPro" id="IPR036565">
    <property type="entry name" value="Mur-like_cat_sf"/>
</dbReference>
<dbReference type="InterPro" id="IPR004101">
    <property type="entry name" value="Mur_ligase_C"/>
</dbReference>
<dbReference type="InterPro" id="IPR036615">
    <property type="entry name" value="Mur_ligase_C_dom_sf"/>
</dbReference>
<dbReference type="InterPro" id="IPR013221">
    <property type="entry name" value="Mur_ligase_cen"/>
</dbReference>
<dbReference type="InterPro" id="IPR000713">
    <property type="entry name" value="Mur_ligase_N"/>
</dbReference>
<dbReference type="InterPro" id="IPR050061">
    <property type="entry name" value="MurCDEF_pg_biosynth"/>
</dbReference>
<dbReference type="InterPro" id="IPR005758">
    <property type="entry name" value="UDP-N-AcMur_Ala_ligase_MurC"/>
</dbReference>
<dbReference type="NCBIfam" id="TIGR01082">
    <property type="entry name" value="murC"/>
    <property type="match status" value="1"/>
</dbReference>
<dbReference type="PANTHER" id="PTHR43445:SF3">
    <property type="entry name" value="UDP-N-ACETYLMURAMATE--L-ALANINE LIGASE"/>
    <property type="match status" value="1"/>
</dbReference>
<dbReference type="PANTHER" id="PTHR43445">
    <property type="entry name" value="UDP-N-ACETYLMURAMATE--L-ALANINE LIGASE-RELATED"/>
    <property type="match status" value="1"/>
</dbReference>
<dbReference type="Pfam" id="PF01225">
    <property type="entry name" value="Mur_ligase"/>
    <property type="match status" value="1"/>
</dbReference>
<dbReference type="Pfam" id="PF02875">
    <property type="entry name" value="Mur_ligase_C"/>
    <property type="match status" value="1"/>
</dbReference>
<dbReference type="Pfam" id="PF08245">
    <property type="entry name" value="Mur_ligase_M"/>
    <property type="match status" value="1"/>
</dbReference>
<dbReference type="SUPFAM" id="SSF51984">
    <property type="entry name" value="MurCD N-terminal domain"/>
    <property type="match status" value="1"/>
</dbReference>
<dbReference type="SUPFAM" id="SSF53623">
    <property type="entry name" value="MurD-like peptide ligases, catalytic domain"/>
    <property type="match status" value="1"/>
</dbReference>
<dbReference type="SUPFAM" id="SSF53244">
    <property type="entry name" value="MurD-like peptide ligases, peptide-binding domain"/>
    <property type="match status" value="1"/>
</dbReference>
<sequence length="467" mass="49253">MKHAIKNIHFIGLGGSGMSGIAEVLHNLGYVISGSDLSDSATLQRLARLGIKTFVGHAASNLAKVDAVVTSTAVQADNPEVLAAREKRIPVVPRALMLAELMRLKQGIAIAGTHGKTTTTSLVASVLAEAGLDPTFVIGGRLNSAGANARLGLGDYIVVEADESDASFLNLLPVMAVVTNIDADHMETYGHDFANLKKAFVDFLHRMPFYGTAILCTDDPAVREIVPQVSCPITSYGFGEDAQVRAVNVRPVGAQMHFTAQRRNGVTLPDLEVVLNLAGEHNVLNALSAIAVAVELNVPDTAVQKALAEFKGVGRRFQSYGDVPAKGGGHFTVIEDYGHHPVEVAATLAAARGAFPGRRLVLAFQPHRYTRTRDCFEDFVKVIGQADAVLLAEVYAAGETPIVAADGRSLARALRVAGKLEPVFVSEIDAMPQAILDNALGGDVVMCMGAGSIGLVPGKLLELEGAQ</sequence>
<organism>
    <name type="scientific">Polaromonas sp. (strain JS666 / ATCC BAA-500)</name>
    <dbReference type="NCBI Taxonomy" id="296591"/>
    <lineage>
        <taxon>Bacteria</taxon>
        <taxon>Pseudomonadati</taxon>
        <taxon>Pseudomonadota</taxon>
        <taxon>Betaproteobacteria</taxon>
        <taxon>Burkholderiales</taxon>
        <taxon>Comamonadaceae</taxon>
        <taxon>Polaromonas</taxon>
    </lineage>
</organism>
<comment type="function">
    <text evidence="1">Cell wall formation.</text>
</comment>
<comment type="catalytic activity">
    <reaction evidence="1">
        <text>UDP-N-acetyl-alpha-D-muramate + L-alanine + ATP = UDP-N-acetyl-alpha-D-muramoyl-L-alanine + ADP + phosphate + H(+)</text>
        <dbReference type="Rhea" id="RHEA:23372"/>
        <dbReference type="ChEBI" id="CHEBI:15378"/>
        <dbReference type="ChEBI" id="CHEBI:30616"/>
        <dbReference type="ChEBI" id="CHEBI:43474"/>
        <dbReference type="ChEBI" id="CHEBI:57972"/>
        <dbReference type="ChEBI" id="CHEBI:70757"/>
        <dbReference type="ChEBI" id="CHEBI:83898"/>
        <dbReference type="ChEBI" id="CHEBI:456216"/>
        <dbReference type="EC" id="6.3.2.8"/>
    </reaction>
</comment>
<comment type="pathway">
    <text evidence="1">Cell wall biogenesis; peptidoglycan biosynthesis.</text>
</comment>
<comment type="subcellular location">
    <subcellularLocation>
        <location evidence="1">Cytoplasm</location>
    </subcellularLocation>
</comment>
<comment type="similarity">
    <text evidence="1">Belongs to the MurCDEF family.</text>
</comment>
<reference key="1">
    <citation type="journal article" date="2008" name="Appl. Environ. Microbiol.">
        <title>The genome of Polaromonas sp. strain JS666: insights into the evolution of a hydrocarbon- and xenobiotic-degrading bacterium, and features of relevance to biotechnology.</title>
        <authorList>
            <person name="Mattes T.E."/>
            <person name="Alexander A.K."/>
            <person name="Richardson P.M."/>
            <person name="Munk A.C."/>
            <person name="Han C.S."/>
            <person name="Stothard P."/>
            <person name="Coleman N.V."/>
        </authorList>
    </citation>
    <scope>NUCLEOTIDE SEQUENCE [LARGE SCALE GENOMIC DNA]</scope>
    <source>
        <strain>JS666 / ATCC BAA-500</strain>
    </source>
</reference>
<gene>
    <name evidence="1" type="primary">murC</name>
    <name type="ordered locus">Bpro_1076</name>
</gene>
<feature type="chain" id="PRO_1000004385" description="UDP-N-acetylmuramate--L-alanine ligase">
    <location>
        <begin position="1"/>
        <end position="467"/>
    </location>
</feature>
<feature type="binding site" evidence="1">
    <location>
        <begin position="112"/>
        <end position="118"/>
    </location>
    <ligand>
        <name>ATP</name>
        <dbReference type="ChEBI" id="CHEBI:30616"/>
    </ligand>
</feature>
<proteinExistence type="inferred from homology"/>
<name>MURC_POLSJ</name>
<protein>
    <recommendedName>
        <fullName evidence="1">UDP-N-acetylmuramate--L-alanine ligase</fullName>
        <ecNumber evidence="1">6.3.2.8</ecNumber>
    </recommendedName>
    <alternativeName>
        <fullName evidence="1">UDP-N-acetylmuramoyl-L-alanine synthetase</fullName>
    </alternativeName>
</protein>